<dbReference type="EC" id="6.3.2.8" evidence="1"/>
<dbReference type="EMBL" id="CP001154">
    <property type="protein sequence ID" value="ACO76032.1"/>
    <property type="molecule type" value="Genomic_DNA"/>
</dbReference>
<dbReference type="RefSeq" id="WP_012698495.1">
    <property type="nucleotide sequence ID" value="NC_012559.1"/>
</dbReference>
<dbReference type="SMR" id="C1D5L5"/>
<dbReference type="STRING" id="557598.LHK_03054"/>
<dbReference type="KEGG" id="lhk:LHK_03054"/>
<dbReference type="eggNOG" id="COG0773">
    <property type="taxonomic scope" value="Bacteria"/>
</dbReference>
<dbReference type="HOGENOM" id="CLU_028104_2_2_4"/>
<dbReference type="UniPathway" id="UPA00219"/>
<dbReference type="Proteomes" id="UP000002010">
    <property type="component" value="Chromosome"/>
</dbReference>
<dbReference type="GO" id="GO:0005737">
    <property type="term" value="C:cytoplasm"/>
    <property type="evidence" value="ECO:0007669"/>
    <property type="project" value="UniProtKB-SubCell"/>
</dbReference>
<dbReference type="GO" id="GO:0005524">
    <property type="term" value="F:ATP binding"/>
    <property type="evidence" value="ECO:0007669"/>
    <property type="project" value="UniProtKB-UniRule"/>
</dbReference>
<dbReference type="GO" id="GO:0008763">
    <property type="term" value="F:UDP-N-acetylmuramate-L-alanine ligase activity"/>
    <property type="evidence" value="ECO:0007669"/>
    <property type="project" value="UniProtKB-UniRule"/>
</dbReference>
<dbReference type="GO" id="GO:0051301">
    <property type="term" value="P:cell division"/>
    <property type="evidence" value="ECO:0007669"/>
    <property type="project" value="UniProtKB-KW"/>
</dbReference>
<dbReference type="GO" id="GO:0071555">
    <property type="term" value="P:cell wall organization"/>
    <property type="evidence" value="ECO:0007669"/>
    <property type="project" value="UniProtKB-KW"/>
</dbReference>
<dbReference type="GO" id="GO:0009252">
    <property type="term" value="P:peptidoglycan biosynthetic process"/>
    <property type="evidence" value="ECO:0007669"/>
    <property type="project" value="UniProtKB-UniRule"/>
</dbReference>
<dbReference type="GO" id="GO:0008360">
    <property type="term" value="P:regulation of cell shape"/>
    <property type="evidence" value="ECO:0007669"/>
    <property type="project" value="UniProtKB-KW"/>
</dbReference>
<dbReference type="FunFam" id="3.40.1190.10:FF:000001">
    <property type="entry name" value="UDP-N-acetylmuramate--L-alanine ligase"/>
    <property type="match status" value="1"/>
</dbReference>
<dbReference type="Gene3D" id="3.90.190.20">
    <property type="entry name" value="Mur ligase, C-terminal domain"/>
    <property type="match status" value="1"/>
</dbReference>
<dbReference type="Gene3D" id="3.40.1190.10">
    <property type="entry name" value="Mur-like, catalytic domain"/>
    <property type="match status" value="1"/>
</dbReference>
<dbReference type="Gene3D" id="3.40.50.720">
    <property type="entry name" value="NAD(P)-binding Rossmann-like Domain"/>
    <property type="match status" value="1"/>
</dbReference>
<dbReference type="HAMAP" id="MF_00046">
    <property type="entry name" value="MurC"/>
    <property type="match status" value="1"/>
</dbReference>
<dbReference type="InterPro" id="IPR036565">
    <property type="entry name" value="Mur-like_cat_sf"/>
</dbReference>
<dbReference type="InterPro" id="IPR004101">
    <property type="entry name" value="Mur_ligase_C"/>
</dbReference>
<dbReference type="InterPro" id="IPR036615">
    <property type="entry name" value="Mur_ligase_C_dom_sf"/>
</dbReference>
<dbReference type="InterPro" id="IPR013221">
    <property type="entry name" value="Mur_ligase_cen"/>
</dbReference>
<dbReference type="InterPro" id="IPR000713">
    <property type="entry name" value="Mur_ligase_N"/>
</dbReference>
<dbReference type="InterPro" id="IPR050061">
    <property type="entry name" value="MurCDEF_pg_biosynth"/>
</dbReference>
<dbReference type="InterPro" id="IPR005758">
    <property type="entry name" value="UDP-N-AcMur_Ala_ligase_MurC"/>
</dbReference>
<dbReference type="NCBIfam" id="TIGR01082">
    <property type="entry name" value="murC"/>
    <property type="match status" value="1"/>
</dbReference>
<dbReference type="PANTHER" id="PTHR43445:SF3">
    <property type="entry name" value="UDP-N-ACETYLMURAMATE--L-ALANINE LIGASE"/>
    <property type="match status" value="1"/>
</dbReference>
<dbReference type="PANTHER" id="PTHR43445">
    <property type="entry name" value="UDP-N-ACETYLMURAMATE--L-ALANINE LIGASE-RELATED"/>
    <property type="match status" value="1"/>
</dbReference>
<dbReference type="Pfam" id="PF01225">
    <property type="entry name" value="Mur_ligase"/>
    <property type="match status" value="1"/>
</dbReference>
<dbReference type="Pfam" id="PF02875">
    <property type="entry name" value="Mur_ligase_C"/>
    <property type="match status" value="1"/>
</dbReference>
<dbReference type="Pfam" id="PF08245">
    <property type="entry name" value="Mur_ligase_M"/>
    <property type="match status" value="1"/>
</dbReference>
<dbReference type="SUPFAM" id="SSF51984">
    <property type="entry name" value="MurCD N-terminal domain"/>
    <property type="match status" value="1"/>
</dbReference>
<dbReference type="SUPFAM" id="SSF53623">
    <property type="entry name" value="MurD-like peptide ligases, catalytic domain"/>
    <property type="match status" value="1"/>
</dbReference>
<dbReference type="SUPFAM" id="SSF53244">
    <property type="entry name" value="MurD-like peptide ligases, peptide-binding domain"/>
    <property type="match status" value="1"/>
</dbReference>
<evidence type="ECO:0000255" key="1">
    <source>
        <dbReference type="HAMAP-Rule" id="MF_00046"/>
    </source>
</evidence>
<gene>
    <name evidence="1" type="primary">murC</name>
    <name type="ordered locus">LHK_03054</name>
</gene>
<accession>C1D5L5</accession>
<protein>
    <recommendedName>
        <fullName evidence="1">UDP-N-acetylmuramate--L-alanine ligase</fullName>
        <ecNumber evidence="1">6.3.2.8</ecNumber>
    </recommendedName>
    <alternativeName>
        <fullName evidence="1">UDP-N-acetylmuramoyl-L-alanine synthetase</fullName>
    </alternativeName>
</protein>
<reference key="1">
    <citation type="journal article" date="2009" name="PLoS Genet.">
        <title>The complete genome and proteome of Laribacter hongkongensis reveal potential mechanisms for adaptations to different temperatures and habitats.</title>
        <authorList>
            <person name="Woo P.C.Y."/>
            <person name="Lau S.K.P."/>
            <person name="Tse H."/>
            <person name="Teng J.L.L."/>
            <person name="Curreem S.O."/>
            <person name="Tsang A.K.L."/>
            <person name="Fan R.Y.Y."/>
            <person name="Wong G.K.M."/>
            <person name="Huang Y."/>
            <person name="Loman N.J."/>
            <person name="Snyder L.A.S."/>
            <person name="Cai J.J."/>
            <person name="Huang J.-D."/>
            <person name="Mak W."/>
            <person name="Pallen M.J."/>
            <person name="Lok S."/>
            <person name="Yuen K.-Y."/>
        </authorList>
    </citation>
    <scope>NUCLEOTIDE SEQUENCE [LARGE SCALE GENOMIC DNA]</scope>
    <source>
        <strain>HLHK9</strain>
    </source>
</reference>
<organism>
    <name type="scientific">Laribacter hongkongensis (strain HLHK9)</name>
    <dbReference type="NCBI Taxonomy" id="557598"/>
    <lineage>
        <taxon>Bacteria</taxon>
        <taxon>Pseudomonadati</taxon>
        <taxon>Pseudomonadota</taxon>
        <taxon>Betaproteobacteria</taxon>
        <taxon>Neisseriales</taxon>
        <taxon>Aquaspirillaceae</taxon>
        <taxon>Laribacter</taxon>
    </lineage>
</organism>
<proteinExistence type="inferred from homology"/>
<comment type="function">
    <text evidence="1">Cell wall formation.</text>
</comment>
<comment type="catalytic activity">
    <reaction evidence="1">
        <text>UDP-N-acetyl-alpha-D-muramate + L-alanine + ATP = UDP-N-acetyl-alpha-D-muramoyl-L-alanine + ADP + phosphate + H(+)</text>
        <dbReference type="Rhea" id="RHEA:23372"/>
        <dbReference type="ChEBI" id="CHEBI:15378"/>
        <dbReference type="ChEBI" id="CHEBI:30616"/>
        <dbReference type="ChEBI" id="CHEBI:43474"/>
        <dbReference type="ChEBI" id="CHEBI:57972"/>
        <dbReference type="ChEBI" id="CHEBI:70757"/>
        <dbReference type="ChEBI" id="CHEBI:83898"/>
        <dbReference type="ChEBI" id="CHEBI:456216"/>
        <dbReference type="EC" id="6.3.2.8"/>
    </reaction>
</comment>
<comment type="pathway">
    <text evidence="1">Cell wall biogenesis; peptidoglycan biosynthesis.</text>
</comment>
<comment type="subcellular location">
    <subcellularLocation>
        <location evidence="1">Cytoplasm</location>
    </subcellularLocation>
</comment>
<comment type="similarity">
    <text evidence="1">Belongs to the MurCDEF family.</text>
</comment>
<sequence>MKHKVRHIHFVGIGGVGMSGIAEVLLTLGYTVSGSDLAASATTERLAAAGAQIHVGHAEGHVHGANVVVTSTAVQADNPEVMAARAAGIPIVPRAQMLAELMRFKQGIAIAGTHGKTTTTSLVASALGRAGLDPTFVIGGRLTAAGSNARLGSGDYLVAEADESDASFLCLSPVMAVVTNIDADHMDTYGHDFERLKQAFIDFLQRLPFYGRAVLCIDDKHVREILPFVTRPLTTYGLTPDADVRADNIRPVAGQMLFDVVWQQQGEEQRHPVTLNLPGRHNVLNALAAIAIGLECGADIGAIAAGLTEFSGVGRRFQRYGDIALPAGGQATVVDDYGHHPVEMAATLAAARGAFPERRLVLAFQPHRYTRTRDLFEDFVGVLSTVDALLLAEVYPAGEAPIVAADGRALARAVRVAGKVEPVFVERIADLPATLLDQLQDGDVVLTMGAGSIGQTPGRLVTLAGTQAA</sequence>
<feature type="chain" id="PRO_1000192096" description="UDP-N-acetylmuramate--L-alanine ligase">
    <location>
        <begin position="1"/>
        <end position="469"/>
    </location>
</feature>
<feature type="binding site" evidence="1">
    <location>
        <begin position="112"/>
        <end position="118"/>
    </location>
    <ligand>
        <name>ATP</name>
        <dbReference type="ChEBI" id="CHEBI:30616"/>
    </ligand>
</feature>
<name>MURC_LARHH</name>
<keyword id="KW-0067">ATP-binding</keyword>
<keyword id="KW-0131">Cell cycle</keyword>
<keyword id="KW-0132">Cell division</keyword>
<keyword id="KW-0133">Cell shape</keyword>
<keyword id="KW-0961">Cell wall biogenesis/degradation</keyword>
<keyword id="KW-0963">Cytoplasm</keyword>
<keyword id="KW-0436">Ligase</keyword>
<keyword id="KW-0547">Nucleotide-binding</keyword>
<keyword id="KW-0573">Peptidoglycan synthesis</keyword>
<keyword id="KW-1185">Reference proteome</keyword>